<reference key="1">
    <citation type="journal article" date="1993" name="Virology">
        <title>Comparative sequence analysis of VP4s from five Australian porcine rotaviruses: implication of an apparent new P type.</title>
        <authorList>
            <person name="Huang J.A."/>
            <person name="Nagesha H.S."/>
            <person name="Holmes I.H."/>
        </authorList>
    </citation>
    <scope>NUCLEOTIDE SEQUENCE [MRNA]</scope>
</reference>
<reference key="2">
    <citation type="journal article" date="2002" name="J. Virol.">
        <title>Initial interaction of rotavirus strains with N-acetylneuraminic (sialic) acid residues on the cell surface correlates with VP4 genotype, not species of origin.</title>
        <authorList>
            <person name="Ciarlet M."/>
            <person name="Ludert J.E."/>
            <person name="Iturriza-Gomara M."/>
            <person name="Liprandi F."/>
            <person name="Gray J.J."/>
            <person name="Desselberger U."/>
            <person name="Estes M.K."/>
        </authorList>
    </citation>
    <scope>SIALIC ACID DEPENDENCY</scope>
</reference>
<reference key="3">
    <citation type="journal article" date="2006" name="Glycoconj. J.">
        <title>Role of sialic acids in rotavirus infection.</title>
        <authorList>
            <person name="Isa P."/>
            <person name="Arias C.F."/>
            <person name="Lopez S."/>
        </authorList>
    </citation>
    <scope>REVIEW</scope>
</reference>
<reference key="4">
    <citation type="journal article" date="2007" name="J. Mol. Biol.">
        <title>Insight into host cell carbohydrate-recognition by human and porcine rotavirus from crystal structures of the virion spike associated carbohydrate-binding domain (VP8*).</title>
        <authorList>
            <person name="Blanchard H."/>
            <person name="Yu X."/>
            <person name="Coulson B.S."/>
            <person name="von Itzstein M."/>
        </authorList>
    </citation>
    <scope>X-RAY CRYSTALLOGRAPHY (2.3 ANGSTROMS) OF 64-224</scope>
</reference>
<evidence type="ECO:0000255" key="1">
    <source>
        <dbReference type="HAMAP-Rule" id="MF_04132"/>
    </source>
</evidence>
<evidence type="ECO:0000269" key="2">
    <source>
    </source>
</evidence>
<evidence type="ECO:0000269" key="3">
    <source>
    </source>
</evidence>
<evidence type="ECO:0000303" key="4">
    <source>
    </source>
</evidence>
<evidence type="ECO:0007829" key="5">
    <source>
        <dbReference type="PDB" id="3SIT"/>
    </source>
</evidence>
<evidence type="ECO:0007829" key="6">
    <source>
        <dbReference type="PDB" id="3TAY"/>
    </source>
</evidence>
<feature type="chain" id="PRO_0000369439" description="Outer capsid protein VP4" evidence="1">
    <location>
        <begin position="1"/>
        <end position="776"/>
    </location>
</feature>
<feature type="chain" id="PRO_0000369440" description="Outer capsid protein VP8*" evidence="1">
    <location>
        <begin position="1"/>
        <end position="231"/>
    </location>
</feature>
<feature type="chain" id="PRO_0000369441" description="Outer capsid protein VP5*" evidence="1">
    <location>
        <begin position="248"/>
        <end position="776"/>
    </location>
</feature>
<feature type="region of interest" description="Spike head" evidence="1">
    <location>
        <begin position="65"/>
        <end position="224"/>
    </location>
</feature>
<feature type="region of interest" description="Spike body and stalk (antigen domain)" evidence="1">
    <location>
        <begin position="248"/>
        <end position="479"/>
    </location>
</feature>
<feature type="region of interest" description="DGE motif">
    <location>
        <begin position="308"/>
        <end position="310"/>
    </location>
</feature>
<feature type="region of interest" description="Hydrophobic; possible role in virus entry into host cell" evidence="1">
    <location>
        <begin position="389"/>
        <end position="409"/>
    </location>
</feature>
<feature type="region of interest" description="Spike foot" evidence="1">
    <location>
        <begin position="510"/>
        <end position="776"/>
    </location>
</feature>
<feature type="coiled-coil region" evidence="1">
    <location>
        <begin position="484"/>
        <end position="518"/>
    </location>
</feature>
<feature type="short sequence motif" description="DGE motif; interaction with ITGA2/ITGB1 heterodimer" evidence="1">
    <location>
        <begin position="308"/>
        <end position="310"/>
    </location>
</feature>
<feature type="short sequence motif" description="YGL motif; interaction with ITGA4" evidence="1">
    <location>
        <begin position="448"/>
        <end position="450"/>
    </location>
</feature>
<feature type="short sequence motif" description="KID motif; interaction with HSPA8" evidence="1">
    <location>
        <begin position="644"/>
        <end position="646"/>
    </location>
</feature>
<feature type="site" description="Binding to sialic acid" evidence="1">
    <location>
        <position position="101"/>
    </location>
</feature>
<feature type="site" description="Binding to sialic acid" evidence="1">
    <location>
        <position position="190"/>
    </location>
</feature>
<feature type="site" description="Cleavage" evidence="1">
    <location>
        <begin position="231"/>
        <end position="232"/>
    </location>
</feature>
<feature type="site" description="Cleavage" evidence="1">
    <location>
        <begin position="241"/>
        <end position="242"/>
    </location>
</feature>
<feature type="site" description="Cleavage; associated with enhancement of infectivity" evidence="1">
    <location>
        <begin position="247"/>
        <end position="248"/>
    </location>
</feature>
<feature type="disulfide bond" evidence="1">
    <location>
        <begin position="203"/>
        <end position="216"/>
    </location>
</feature>
<feature type="disulfide bond" evidence="1">
    <location>
        <begin position="318"/>
        <end position="380"/>
    </location>
</feature>
<feature type="strand" evidence="5">
    <location>
        <begin position="66"/>
        <end position="69"/>
    </location>
</feature>
<feature type="strand" evidence="6">
    <location>
        <begin position="71"/>
        <end position="74"/>
    </location>
</feature>
<feature type="strand" evidence="5">
    <location>
        <begin position="80"/>
        <end position="84"/>
    </location>
</feature>
<feature type="strand" evidence="5">
    <location>
        <begin position="88"/>
        <end position="96"/>
    </location>
</feature>
<feature type="strand" evidence="5">
    <location>
        <begin position="98"/>
        <end position="100"/>
    </location>
</feature>
<feature type="strand" evidence="5">
    <location>
        <begin position="102"/>
        <end position="108"/>
    </location>
</feature>
<feature type="strand" evidence="5">
    <location>
        <begin position="110"/>
        <end position="121"/>
    </location>
</feature>
<feature type="strand" evidence="5">
    <location>
        <begin position="124"/>
        <end position="132"/>
    </location>
</feature>
<feature type="strand" evidence="5">
    <location>
        <begin position="138"/>
        <end position="147"/>
    </location>
</feature>
<feature type="strand" evidence="5">
    <location>
        <begin position="153"/>
        <end position="162"/>
    </location>
</feature>
<feature type="strand" evidence="5">
    <location>
        <begin position="165"/>
        <end position="170"/>
    </location>
</feature>
<feature type="strand" evidence="5">
    <location>
        <begin position="173"/>
        <end position="180"/>
    </location>
</feature>
<feature type="strand" evidence="5">
    <location>
        <begin position="185"/>
        <end position="190"/>
    </location>
</feature>
<feature type="helix" evidence="5">
    <location>
        <begin position="194"/>
        <end position="196"/>
    </location>
</feature>
<feature type="strand" evidence="5">
    <location>
        <begin position="198"/>
        <end position="203"/>
    </location>
</feature>
<feature type="strand" evidence="5">
    <location>
        <begin position="205"/>
        <end position="209"/>
    </location>
</feature>
<feature type="helix" evidence="5">
    <location>
        <begin position="210"/>
        <end position="212"/>
    </location>
</feature>
<feature type="helix" evidence="5">
    <location>
        <begin position="213"/>
        <end position="222"/>
    </location>
</feature>
<dbReference type="EMBL" id="L07888">
    <property type="status" value="NOT_ANNOTATED_CDS"/>
    <property type="molecule type" value="mRNA"/>
</dbReference>
<dbReference type="PDB" id="2I2S">
    <property type="method" value="X-ray"/>
    <property type="resolution" value="2.30 A"/>
    <property type="chains" value="A/B=64-224"/>
</dbReference>
<dbReference type="PDB" id="3SIS">
    <property type="method" value="X-ray"/>
    <property type="resolution" value="2.20 A"/>
    <property type="chains" value="A/B=64-224"/>
</dbReference>
<dbReference type="PDB" id="3SIT">
    <property type="method" value="X-ray"/>
    <property type="resolution" value="1.80 A"/>
    <property type="chains" value="A/B=64-224"/>
</dbReference>
<dbReference type="PDB" id="3TAY">
    <property type="method" value="X-ray"/>
    <property type="resolution" value="1.85 A"/>
    <property type="chains" value="A/B=64-224"/>
</dbReference>
<dbReference type="PDBsum" id="2I2S"/>
<dbReference type="PDBsum" id="3SIS"/>
<dbReference type="PDBsum" id="3SIT"/>
<dbReference type="PDBsum" id="3TAY"/>
<dbReference type="SMR" id="P0C6Y8"/>
<dbReference type="UniLectin" id="P0C6Y8"/>
<dbReference type="EvolutionaryTrace" id="P0C6Y8"/>
<dbReference type="GO" id="GO:0044172">
    <property type="term" value="C:host cell endoplasmic reticulum-Golgi intermediate compartment"/>
    <property type="evidence" value="ECO:0007669"/>
    <property type="project" value="UniProtKB-SubCell"/>
</dbReference>
<dbReference type="GO" id="GO:0020002">
    <property type="term" value="C:host cell plasma membrane"/>
    <property type="evidence" value="ECO:0007669"/>
    <property type="project" value="UniProtKB-SubCell"/>
</dbReference>
<dbReference type="GO" id="GO:0044168">
    <property type="term" value="C:host cell rough endoplasmic reticulum"/>
    <property type="evidence" value="ECO:0007669"/>
    <property type="project" value="UniProtKB-SubCell"/>
</dbReference>
<dbReference type="GO" id="GO:0044163">
    <property type="term" value="C:host cytoskeleton"/>
    <property type="evidence" value="ECO:0007669"/>
    <property type="project" value="UniProtKB-SubCell"/>
</dbReference>
<dbReference type="GO" id="GO:0016020">
    <property type="term" value="C:membrane"/>
    <property type="evidence" value="ECO:0007669"/>
    <property type="project" value="UniProtKB-KW"/>
</dbReference>
<dbReference type="GO" id="GO:0039624">
    <property type="term" value="C:viral outer capsid"/>
    <property type="evidence" value="ECO:0007669"/>
    <property type="project" value="UniProtKB-UniRule"/>
</dbReference>
<dbReference type="GO" id="GO:0039665">
    <property type="term" value="P:permeabilization of host organelle membrane involved in viral entry into host cell"/>
    <property type="evidence" value="ECO:0007669"/>
    <property type="project" value="UniProtKB-UniRule"/>
</dbReference>
<dbReference type="GO" id="GO:0019062">
    <property type="term" value="P:virion attachment to host cell"/>
    <property type="evidence" value="ECO:0007669"/>
    <property type="project" value="UniProtKB-UniRule"/>
</dbReference>
<dbReference type="Gene3D" id="1.20.5.170">
    <property type="match status" value="1"/>
</dbReference>
<dbReference type="Gene3D" id="2.60.120.200">
    <property type="match status" value="1"/>
</dbReference>
<dbReference type="HAMAP" id="MF_04132">
    <property type="entry name" value="Rota_A_VP4"/>
    <property type="match status" value="1"/>
</dbReference>
<dbReference type="HAMAP" id="MF_04125">
    <property type="entry name" value="Rota_VP4"/>
    <property type="match status" value="1"/>
</dbReference>
<dbReference type="InterPro" id="IPR013320">
    <property type="entry name" value="ConA-like_dom_sf"/>
</dbReference>
<dbReference type="InterPro" id="IPR042546">
    <property type="entry name" value="Rota_A_VP4"/>
</dbReference>
<dbReference type="InterPro" id="IPR035330">
    <property type="entry name" value="Rota_VP4_MID"/>
</dbReference>
<dbReference type="InterPro" id="IPR038017">
    <property type="entry name" value="Rota_VP4_MID_sf"/>
</dbReference>
<dbReference type="InterPro" id="IPR000416">
    <property type="entry name" value="VP4_concanavalin-like"/>
</dbReference>
<dbReference type="InterPro" id="IPR035329">
    <property type="entry name" value="VP4_helical"/>
</dbReference>
<dbReference type="Pfam" id="PF17477">
    <property type="entry name" value="Rota_VP4_MID"/>
    <property type="match status" value="1"/>
</dbReference>
<dbReference type="Pfam" id="PF00426">
    <property type="entry name" value="VP4_haemagglut"/>
    <property type="match status" value="1"/>
</dbReference>
<dbReference type="Pfam" id="PF17478">
    <property type="entry name" value="VP4_helical"/>
    <property type="match status" value="1"/>
</dbReference>
<dbReference type="SUPFAM" id="SSF49899">
    <property type="entry name" value="Concanavalin A-like lectins/glucanases"/>
    <property type="match status" value="1"/>
</dbReference>
<dbReference type="SUPFAM" id="SSF111379">
    <property type="entry name" value="VP4 membrane interaction domain"/>
    <property type="match status" value="1"/>
</dbReference>
<proteinExistence type="evidence at protein level"/>
<comment type="function">
    <molecule>Outer capsid protein VP4</molecule>
    <text evidence="1">Spike-forming protein that mediates virion attachment to the host epithelial cell receptors and plays a major role in cell penetration, determination of host range restriction and virulence. Rotavirus attachment and entry into the host cell probably involves multiple sequential contacts between the outer capsid proteins VP4 and VP7, and the cell receptors. It is subsequently lost, together with VP7, following virus entry into the host cell. Following entry into the host cell, low intracellular or intravesicular Ca(2+) concentration probably causes the calcium-stabilized VP7 trimers to dissociate from the virion. This step is probably necessary for the membrane-disrupting entry step and the release of VP4, which is locked onto the virion by VP7. During the virus exit from the host cell, VP4 seems to be required to target the newly formed virions to the host cell lipid rafts.</text>
</comment>
<comment type="function">
    <molecule>Outer capsid protein VP5*</molecule>
    <text evidence="1">Forms the spike 'foot' and 'body' and acts as a membrane permeabilization protein that mediates release of viral particles from endosomal compartments into the cytoplasm. During entry, the part of VP5* that protrudes from the virus folds back on itself and reorganizes from a local dimer to a trimer. This reorganization may be linked to membrane penetration by exposing VP5* hydrophobic region. In integrin-dependent strains, VP5* targets the integrin heterodimer ITGA2/ITGB1 for cell attachment.</text>
</comment>
<comment type="function">
    <molecule>Outer capsid protein VP8*</molecule>
    <text evidence="1">Forms the head of the spikes and mediates the recognition of specific host cell surface glycans. It is the viral hemagglutinin and an important target of neutralizing antibodies. In sialic acid-dependent strains, VP8* binds to host cell sialic acid, most probably a ganglioside, providing the initial contact. In some other strains, VP8* mediates the attachment to histo-blood group antigens (HBGAs) for viral entry.</text>
</comment>
<comment type="subunit">
    <molecule>Outer capsid protein VP4</molecule>
    <text evidence="1">Homotrimer. VP4 adopts a dimeric appearance above the capsid surface, while forming a trimeric base anchored inside the capsid layer. Only hints of the third molecule are observed above the capsid surface. It probably performs a series of molecular rearrangements during viral entry. Prior to trypsin cleavage, it is flexible. The priming trypsin cleavage triggers its rearrangement into rigid spikes with approximate two-fold symmetry of their protruding parts. After an unknown second triggering event, cleaved VP4 may undergo another rearrangement, in which two VP5* subunits fold back on themselves and join a third subunit to form a tightly associated trimer, shaped like a folded umbrella. Interacts with VP6. Interacts with VP7.</text>
</comment>
<comment type="subunit">
    <molecule>Outer capsid protein VP5*</molecule>
    <text evidence="1">Homotrimer. The trimer is coiled-coil stabilized by its C-terminus, however, its N-terminus, known as antigen domain or 'body', seems to be flexible allowing it to self-associate either as a dimer or a trimer.</text>
</comment>
<comment type="subcellular location">
    <molecule>Outer capsid protein VP4</molecule>
    <subcellularLocation>
        <location evidence="1">Virion</location>
    </subcellularLocation>
    <subcellularLocation>
        <location evidence="1">Host rough endoplasmic reticulum</location>
    </subcellularLocation>
    <subcellularLocation>
        <location evidence="1">Host cell membrane</location>
    </subcellularLocation>
    <subcellularLocation>
        <location evidence="1">Host cytoplasm</location>
        <location evidence="1">Host cytoskeleton</location>
    </subcellularLocation>
    <subcellularLocation>
        <location evidence="1">Host endoplasmic reticulum-Golgi intermediate compartment</location>
    </subcellularLocation>
    <text evidence="1">The outer layer contains 180 copies of VP4, grouped as 60 dimers. Immature double-layered particles assembled in the cytoplasm bud across the membrane of the endoplasmic reticulum, acquiring during this process a transient lipid membrane that is modified with the ER resident viral glycoproteins NSP4 and VP7; these enveloped particles also contain VP4. As the particles move towards the interior of the ER cisternae, the transient lipid membrane and the non-structural protein NSP4 are lost, while the virus surface proteins VP4 and VP7 rearrange to form the outermost virus protein layer, yielding mature infectious triple-layered particles. VP4 also seems to associate with lipid rafts of the host cell membrane probably for the exit of the virus from the infected cell by an alternate pathway.</text>
</comment>
<comment type="subcellular location">
    <molecule>Outer capsid protein VP8*</molecule>
    <subcellularLocation>
        <location evidence="1">Virion</location>
    </subcellularLocation>
    <text evidence="1">Outer capsid protein.</text>
</comment>
<comment type="subcellular location">
    <molecule>Outer capsid protein VP5*</molecule>
    <subcellularLocation>
        <location evidence="1">Virion</location>
    </subcellularLocation>
    <text evidence="1">Outer capsid protein.</text>
</comment>
<comment type="domain">
    <molecule>Outer capsid protein VP4</molecule>
    <text evidence="1">The VP4 spike is divided into a foot, a stalk and body, and a head.</text>
</comment>
<comment type="PTM">
    <molecule>Outer capsid protein VP4</molecule>
    <text evidence="1">Proteolytic cleavage by trypsin results in activation of VP4 functions and greatly increases infectivity. The penetration into the host cell is dependent on trypsin treatment of VP4. It produces two peptides, VP5* and VP8* that remain associated with the virion. Cleavage of VP4 by trypsin probably occurs in vivo in the lumen of the intestine prior to infection of enterocytes. Trypsin seems to be incorporated into the three-layered viral particles but remains inactive as long as the viral outer capsid is intact and would only be activated upon the solubilization of the latter.</text>
</comment>
<comment type="miscellaneous">
    <text evidence="1">In group A rotaviruses, VP4 defines the P serotype.</text>
</comment>
<comment type="miscellaneous">
    <text evidence="1">Some rotavirus strains are neuraminidase-sensitive and require sialic acid to attach to the cell surface. Some rotavirus strains are integrin-dependent. Some rotavirus strains depend on ganglioside for their entry into the host cell. Hsp70 also seems to be involved in the entry of some strains.</text>
</comment>
<comment type="miscellaneous">
    <text evidence="1 2 3 4">This strain probably uses sialic acid to attach to the host cell.</text>
</comment>
<comment type="similarity">
    <text evidence="1">Belongs to the rotavirus VP4 family.</text>
</comment>
<keyword id="KW-0002">3D-structure</keyword>
<keyword id="KW-0167">Capsid protein</keyword>
<keyword id="KW-0175">Coiled coil</keyword>
<keyword id="KW-1015">Disulfide bond</keyword>
<keyword id="KW-0348">Hemagglutinin</keyword>
<keyword id="KW-1032">Host cell membrane</keyword>
<keyword id="KW-1035">Host cytoplasm</keyword>
<keyword id="KW-1037">Host cytoskeleton</keyword>
<keyword id="KW-1038">Host endoplasmic reticulum</keyword>
<keyword id="KW-1043">Host membrane</keyword>
<keyword id="KW-0945">Host-virus interaction</keyword>
<keyword id="KW-0472">Membrane</keyword>
<keyword id="KW-1152">Outer capsid protein</keyword>
<keyword id="KW-1161">Viral attachment to host cell</keyword>
<keyword id="KW-1162">Viral penetration into host cytoplasm</keyword>
<keyword id="KW-1173">Viral penetration via permeabilization of host membrane</keyword>
<keyword id="KW-0946">Virion</keyword>
<keyword id="KW-1160">Virus entry into host cell</keyword>
<sequence length="776" mass="86924">MASLIYRQLLTNSYTVNLSDEIQEIGSAKSKNVTINPGPFAQTGYAPVNWGAGETNDSTTVEPLLDGPYRPTTFNPPTSYWVLLAPTVEGVVIQGTNNIDRWLATILIEPNVQTTNRIYNLFGQQVTLSVENTSQTQWKFIDVSKTTPTGSYTQHGPLFSTPKLYAVMKFSGRIYTYNGTTPNATTGYYSTTNYDTVNMTLFCDFYIIPRNQEEKCTEYINHGLPPIQNTRNVVPVSLSAREVVHTRAQVNEDIVVSKTSLWKEMQYNRDITIRFKFDRTIIKAGGLGYKWSEISFKPITYQYTYTRDGEQITAHTTCSVNGVNNFSYNGGSLPTDFAISRYEVIKENSFVYIDYWDDSQAFRNMVYVRSLAANLNTVTCTGGSYTFALPLGNYPVMTGGTVSLHPAGVTLSTQFTDFVSLNSLRFRFRLTVGEPSFSITRTRVSRLYGLPAANPNNQREYYEISGRFSLISLVPSNDDYQTPIMNSVTVRQDLERQLGELRDEFNSLSQQIAMSQLIDLALLPLDMFSMFSGIKSTIDAAKSMATNVMKRFKRSNLASSVSTLTDAMSDAASSVSRSSSIRSIGSSVSAWTEVSTSITDISTTVDTVSTQTATIAKRLRLKEIATQTDGMNFDDISAAVLKTKIDKSVQITPNTLPDIVTEASEKFIPNRTYRVINNDEVFEAGMDGKFFAYRVDTFDEIPFDVQKFADLVTDSPVISAIIDLKTLKNLKDNYGISKQQAFDLLRSDPKVLREFINQNNPIIRNRIENLIMQCRL</sequence>
<organism>
    <name type="scientific">Rotavirus A (isolate RVA/Pig/Australia/CRW-8/1987/G3P9[7])</name>
    <name type="common">RV-A</name>
    <dbReference type="NCBI Taxonomy" id="31578"/>
    <lineage>
        <taxon>Viruses</taxon>
        <taxon>Riboviria</taxon>
        <taxon>Orthornavirae</taxon>
        <taxon>Duplornaviricota</taxon>
        <taxon>Resentoviricetes</taxon>
        <taxon>Reovirales</taxon>
        <taxon>Sedoreoviridae</taxon>
        <taxon>Rotavirus</taxon>
        <taxon>Rotavirus A</taxon>
    </lineage>
</organism>
<protein>
    <recommendedName>
        <fullName evidence="1">Outer capsid protein VP4</fullName>
    </recommendedName>
    <alternativeName>
        <fullName evidence="1">Hemagglutinin</fullName>
    </alternativeName>
    <component>
        <recommendedName>
            <fullName evidence="1">Outer capsid protein VP8*</fullName>
        </recommendedName>
    </component>
    <component>
        <recommendedName>
            <fullName evidence="1">Outer capsid protein VP5*</fullName>
        </recommendedName>
    </component>
</protein>
<accession>P0C6Y8</accession>
<organismHost>
    <name type="scientific">Sus scrofa</name>
    <name type="common">Pig</name>
    <dbReference type="NCBI Taxonomy" id="9823"/>
</organismHost>
<name>VP4_ROTP3</name>